<protein>
    <recommendedName>
        <fullName>Uncharacterized protein 1</fullName>
    </recommendedName>
</protein>
<feature type="chain" id="PRO_0000385407" description="Uncharacterized protein 1">
    <location>
        <begin position="1"/>
        <end position="31"/>
    </location>
</feature>
<feature type="region of interest" description="Disordered" evidence="1">
    <location>
        <begin position="1"/>
        <end position="31"/>
    </location>
</feature>
<organism>
    <name type="scientific">Sulfolobus islandicus filamentous virus (isolate Iceland/Hveragerdi)</name>
    <name type="common">SIFV</name>
    <dbReference type="NCBI Taxonomy" id="654908"/>
    <lineage>
        <taxon>Viruses</taxon>
        <taxon>Adnaviria</taxon>
        <taxon>Zilligvirae</taxon>
        <taxon>Taleaviricota</taxon>
        <taxon>Tokiviricetes</taxon>
        <taxon>Ligamenvirales</taxon>
        <taxon>Lipothrixviridae</taxon>
        <taxon>Betalipothrixvirus</taxon>
        <taxon>Sulfolobus islandicus filamentous virus</taxon>
    </lineage>
</organism>
<keyword id="KW-1185">Reference proteome</keyword>
<dbReference type="EMBL" id="AF440571">
    <property type="protein sequence ID" value="AAL27712.1"/>
    <property type="molecule type" value="Genomic_DNA"/>
</dbReference>
<dbReference type="RefSeq" id="NP_445666.1">
    <property type="nucleotide sequence ID" value="NC_003214.2"/>
</dbReference>
<dbReference type="SMR" id="Q914M9"/>
<dbReference type="GeneID" id="922278"/>
<dbReference type="KEGG" id="vg:922278"/>
<dbReference type="Proteomes" id="UP000007017">
    <property type="component" value="Segment"/>
</dbReference>
<reference key="1">
    <citation type="journal article" date="2000" name="Virology">
        <title>A novel lipothrixvirus, SIFV, of the extremely thermophilic crenarchaeon Sulfolobus.</title>
        <authorList>
            <person name="Arnold H.P."/>
            <person name="Zillig W."/>
            <person name="Ziese U."/>
            <person name="Holz I."/>
            <person name="Crosby M."/>
            <person name="Utterback T."/>
            <person name="Weidmann J.F."/>
            <person name="Umayam L.A."/>
            <person name="Teffera K."/>
            <person name="Kristjanson J.K."/>
            <person name="Klenk H.P."/>
            <person name="Nelson K.E."/>
            <person name="Fraser C.M."/>
        </authorList>
    </citation>
    <scope>NUCLEOTIDE SEQUENCE [GENOMIC DNA]</scope>
</reference>
<name>Y001_SIFVH</name>
<evidence type="ECO:0000256" key="1">
    <source>
        <dbReference type="SAM" id="MobiDB-lite"/>
    </source>
</evidence>
<gene>
    <name type="primary">SIFV0001</name>
</gene>
<proteinExistence type="predicted"/>
<organismHost>
    <name type="scientific">Saccharolobus islandicus</name>
    <name type="common">Sulfolobus islandicus</name>
    <dbReference type="NCBI Taxonomy" id="43080"/>
</organismHost>
<accession>Q914M9</accession>
<sequence>MKKLERMSEVSQMCSEAKKNRKRMSVVSSVA</sequence>